<keyword id="KW-1185">Reference proteome</keyword>
<keyword id="KW-0687">Ribonucleoprotein</keyword>
<keyword id="KW-0689">Ribosomal protein</keyword>
<keyword id="KW-0694">RNA-binding</keyword>
<keyword id="KW-0699">rRNA-binding</keyword>
<evidence type="ECO:0000255" key="1">
    <source>
        <dbReference type="HAMAP-Rule" id="MF_01343"/>
    </source>
</evidence>
<evidence type="ECO:0000305" key="2"/>
<gene>
    <name evidence="1" type="primary">rpsO</name>
    <name type="ordered locus">STH1528</name>
</gene>
<protein>
    <recommendedName>
        <fullName evidence="1">Small ribosomal subunit protein uS15</fullName>
    </recommendedName>
    <alternativeName>
        <fullName evidence="2">30S ribosomal protein S15</fullName>
    </alternativeName>
</protein>
<proteinExistence type="inferred from homology"/>
<accession>Q67P80</accession>
<name>RS15_SYMTH</name>
<comment type="function">
    <text evidence="1">One of the primary rRNA binding proteins, it binds directly to 16S rRNA where it helps nucleate assembly of the platform of the 30S subunit by binding and bridging several RNA helices of the 16S rRNA.</text>
</comment>
<comment type="function">
    <text evidence="1">Forms an intersubunit bridge (bridge B4) with the 23S rRNA of the 50S subunit in the ribosome.</text>
</comment>
<comment type="subunit">
    <text evidence="1">Part of the 30S ribosomal subunit. Forms a bridge to the 50S subunit in the 70S ribosome, contacting the 23S rRNA.</text>
</comment>
<comment type="similarity">
    <text evidence="1">Belongs to the universal ribosomal protein uS15 family.</text>
</comment>
<dbReference type="EMBL" id="AP006840">
    <property type="protein sequence ID" value="BAD40513.1"/>
    <property type="molecule type" value="Genomic_DNA"/>
</dbReference>
<dbReference type="SMR" id="Q67P80"/>
<dbReference type="STRING" id="292459.STH1528"/>
<dbReference type="KEGG" id="sth:STH1528"/>
<dbReference type="eggNOG" id="COG0184">
    <property type="taxonomic scope" value="Bacteria"/>
</dbReference>
<dbReference type="HOGENOM" id="CLU_148518_0_0_9"/>
<dbReference type="OrthoDB" id="9799262at2"/>
<dbReference type="Proteomes" id="UP000000417">
    <property type="component" value="Chromosome"/>
</dbReference>
<dbReference type="GO" id="GO:0022627">
    <property type="term" value="C:cytosolic small ribosomal subunit"/>
    <property type="evidence" value="ECO:0007669"/>
    <property type="project" value="TreeGrafter"/>
</dbReference>
<dbReference type="GO" id="GO:0019843">
    <property type="term" value="F:rRNA binding"/>
    <property type="evidence" value="ECO:0007669"/>
    <property type="project" value="UniProtKB-UniRule"/>
</dbReference>
<dbReference type="GO" id="GO:0003735">
    <property type="term" value="F:structural constituent of ribosome"/>
    <property type="evidence" value="ECO:0007669"/>
    <property type="project" value="InterPro"/>
</dbReference>
<dbReference type="GO" id="GO:0006412">
    <property type="term" value="P:translation"/>
    <property type="evidence" value="ECO:0007669"/>
    <property type="project" value="UniProtKB-UniRule"/>
</dbReference>
<dbReference type="CDD" id="cd00353">
    <property type="entry name" value="Ribosomal_S15p_S13e"/>
    <property type="match status" value="1"/>
</dbReference>
<dbReference type="FunFam" id="1.10.287.10:FF:000002">
    <property type="entry name" value="30S ribosomal protein S15"/>
    <property type="match status" value="1"/>
</dbReference>
<dbReference type="Gene3D" id="6.10.250.3130">
    <property type="match status" value="1"/>
</dbReference>
<dbReference type="Gene3D" id="1.10.287.10">
    <property type="entry name" value="S15/NS1, RNA-binding"/>
    <property type="match status" value="1"/>
</dbReference>
<dbReference type="HAMAP" id="MF_01343_B">
    <property type="entry name" value="Ribosomal_uS15_B"/>
    <property type="match status" value="1"/>
</dbReference>
<dbReference type="InterPro" id="IPR000589">
    <property type="entry name" value="Ribosomal_uS15"/>
</dbReference>
<dbReference type="InterPro" id="IPR005290">
    <property type="entry name" value="Ribosomal_uS15_bac-type"/>
</dbReference>
<dbReference type="InterPro" id="IPR009068">
    <property type="entry name" value="uS15_NS1_RNA-bd_sf"/>
</dbReference>
<dbReference type="NCBIfam" id="TIGR00952">
    <property type="entry name" value="S15_bact"/>
    <property type="match status" value="1"/>
</dbReference>
<dbReference type="PANTHER" id="PTHR23321">
    <property type="entry name" value="RIBOSOMAL PROTEIN S15, BACTERIAL AND ORGANELLAR"/>
    <property type="match status" value="1"/>
</dbReference>
<dbReference type="PANTHER" id="PTHR23321:SF26">
    <property type="entry name" value="SMALL RIBOSOMAL SUBUNIT PROTEIN US15M"/>
    <property type="match status" value="1"/>
</dbReference>
<dbReference type="Pfam" id="PF00312">
    <property type="entry name" value="Ribosomal_S15"/>
    <property type="match status" value="1"/>
</dbReference>
<dbReference type="SMART" id="SM01387">
    <property type="entry name" value="Ribosomal_S15"/>
    <property type="match status" value="1"/>
</dbReference>
<dbReference type="SUPFAM" id="SSF47060">
    <property type="entry name" value="S15/NS1 RNA-binding domain"/>
    <property type="match status" value="1"/>
</dbReference>
<dbReference type="PROSITE" id="PS00362">
    <property type="entry name" value="RIBOSOMAL_S15"/>
    <property type="match status" value="1"/>
</dbReference>
<sequence length="92" mass="10929">MPLSQEEKQRIINEFKTHETDTGSPEVQIALLTHRINELTEHLRVHKKDHHSRRGLLKMVGQRRALLVYLNKISPERYAKLIDRLNIRTVIR</sequence>
<feature type="chain" id="PRO_0000115564" description="Small ribosomal subunit protein uS15">
    <location>
        <begin position="1"/>
        <end position="92"/>
    </location>
</feature>
<organism>
    <name type="scientific">Symbiobacterium thermophilum (strain DSM 24528 / JCM 14929 / IAM 14863 / T)</name>
    <dbReference type="NCBI Taxonomy" id="292459"/>
    <lineage>
        <taxon>Bacteria</taxon>
        <taxon>Bacillati</taxon>
        <taxon>Bacillota</taxon>
        <taxon>Clostridia</taxon>
        <taxon>Eubacteriales</taxon>
        <taxon>Symbiobacteriaceae</taxon>
        <taxon>Symbiobacterium</taxon>
    </lineage>
</organism>
<reference key="1">
    <citation type="journal article" date="2004" name="Nucleic Acids Res.">
        <title>Genome sequence of Symbiobacterium thermophilum, an uncultivable bacterium that depends on microbial commensalism.</title>
        <authorList>
            <person name="Ueda K."/>
            <person name="Yamashita A."/>
            <person name="Ishikawa J."/>
            <person name="Shimada M."/>
            <person name="Watsuji T."/>
            <person name="Morimura K."/>
            <person name="Ikeda H."/>
            <person name="Hattori M."/>
            <person name="Beppu T."/>
        </authorList>
    </citation>
    <scope>NUCLEOTIDE SEQUENCE [LARGE SCALE GENOMIC DNA]</scope>
    <source>
        <strain>DSM 24528 / JCM 14929 / IAM 14863 / T</strain>
    </source>
</reference>